<comment type="function">
    <text evidence="1">Catalyzes the condensation of ATP and 5-phosphoribose 1-diphosphate to form N'-(5'-phosphoribosyl)-ATP (PR-ATP). Has a crucial role in the pathway because the rate of histidine biosynthesis seems to be controlled primarily by regulation of HisG enzymatic activity.</text>
</comment>
<comment type="catalytic activity">
    <reaction evidence="1">
        <text>1-(5-phospho-beta-D-ribosyl)-ATP + diphosphate = 5-phospho-alpha-D-ribose 1-diphosphate + ATP</text>
        <dbReference type="Rhea" id="RHEA:18473"/>
        <dbReference type="ChEBI" id="CHEBI:30616"/>
        <dbReference type="ChEBI" id="CHEBI:33019"/>
        <dbReference type="ChEBI" id="CHEBI:58017"/>
        <dbReference type="ChEBI" id="CHEBI:73183"/>
        <dbReference type="EC" id="2.4.2.17"/>
    </reaction>
</comment>
<comment type="pathway">
    <text evidence="1">Amino-acid biosynthesis; L-histidine biosynthesis; L-histidine from 5-phospho-alpha-D-ribose 1-diphosphate: step 1/9.</text>
</comment>
<comment type="subunit">
    <text evidence="1">Heteromultimer composed of HisG and HisZ subunits.</text>
</comment>
<comment type="subcellular location">
    <subcellularLocation>
        <location evidence="1">Cytoplasm</location>
    </subcellularLocation>
</comment>
<comment type="domain">
    <text>Lacks the C-terminal regulatory region which is replaced by HisZ.</text>
</comment>
<comment type="similarity">
    <text evidence="1">Belongs to the ATP phosphoribosyltransferase family. Short subfamily.</text>
</comment>
<keyword id="KW-0028">Amino-acid biosynthesis</keyword>
<keyword id="KW-0067">ATP-binding</keyword>
<keyword id="KW-0963">Cytoplasm</keyword>
<keyword id="KW-0328">Glycosyltransferase</keyword>
<keyword id="KW-0368">Histidine biosynthesis</keyword>
<keyword id="KW-0547">Nucleotide-binding</keyword>
<keyword id="KW-0808">Transferase</keyword>
<reference key="1">
    <citation type="journal article" date="2010" name="Genome Biol. Evol.">
        <title>Continuing evolution of Burkholderia mallei through genome reduction and large-scale rearrangements.</title>
        <authorList>
            <person name="Losada L."/>
            <person name="Ronning C.M."/>
            <person name="DeShazer D."/>
            <person name="Woods D."/>
            <person name="Fedorova N."/>
            <person name="Kim H.S."/>
            <person name="Shabalina S.A."/>
            <person name="Pearson T.R."/>
            <person name="Brinkac L."/>
            <person name="Tan P."/>
            <person name="Nandi T."/>
            <person name="Crabtree J."/>
            <person name="Badger J."/>
            <person name="Beckstrom-Sternberg S."/>
            <person name="Saqib M."/>
            <person name="Schutzer S.E."/>
            <person name="Keim P."/>
            <person name="Nierman W.C."/>
        </authorList>
    </citation>
    <scope>NUCLEOTIDE SEQUENCE [LARGE SCALE GENOMIC DNA]</scope>
    <source>
        <strain>NCTC 10247</strain>
    </source>
</reference>
<protein>
    <recommendedName>
        <fullName evidence="1">ATP phosphoribosyltransferase</fullName>
        <shortName evidence="1">ATP-PRT</shortName>
        <shortName evidence="1">ATP-PRTase</shortName>
        <ecNumber evidence="1">2.4.2.17</ecNumber>
    </recommendedName>
</protein>
<name>HIS1_BURM7</name>
<accession>A3MPV1</accession>
<sequence length="218" mass="23067">MSAPLTLALSKGRIFEETVPLLAAAGVTVAEDPETSRKLILPTTDPNLRVIVVRATDVPTYVEYGAADFGVAGKDVLLEHGGGGLYQPIDLNIARCRMSVAVPAGFDYANAVRQGARLRVATKYVETAREHFAAKGVHVDLIKLYGSMELAPLVGLADAIVDLVSSGGTLKANNLVEVEEIMPISSRLVVNQAALKLKRAALKPFLDAFERASLGSGA</sequence>
<feature type="chain" id="PRO_1000063270" description="ATP phosphoribosyltransferase">
    <location>
        <begin position="1"/>
        <end position="218"/>
    </location>
</feature>
<gene>
    <name evidence="1" type="primary">hisG</name>
    <name type="ordered locus">BMA10247_2766</name>
</gene>
<dbReference type="EC" id="2.4.2.17" evidence="1"/>
<dbReference type="EMBL" id="CP000548">
    <property type="protein sequence ID" value="ABO05453.1"/>
    <property type="molecule type" value="Genomic_DNA"/>
</dbReference>
<dbReference type="RefSeq" id="WP_004199915.1">
    <property type="nucleotide sequence ID" value="NZ_CP007802.1"/>
</dbReference>
<dbReference type="SMR" id="A3MPV1"/>
<dbReference type="GeneID" id="93061757"/>
<dbReference type="KEGG" id="bmaz:BM44_566"/>
<dbReference type="KEGG" id="bmn:BMA10247_2766"/>
<dbReference type="PATRIC" id="fig|320389.8.peg.620"/>
<dbReference type="UniPathway" id="UPA00031">
    <property type="reaction ID" value="UER00006"/>
</dbReference>
<dbReference type="GO" id="GO:0005737">
    <property type="term" value="C:cytoplasm"/>
    <property type="evidence" value="ECO:0007669"/>
    <property type="project" value="UniProtKB-SubCell"/>
</dbReference>
<dbReference type="GO" id="GO:0005524">
    <property type="term" value="F:ATP binding"/>
    <property type="evidence" value="ECO:0007669"/>
    <property type="project" value="UniProtKB-KW"/>
</dbReference>
<dbReference type="GO" id="GO:0003879">
    <property type="term" value="F:ATP phosphoribosyltransferase activity"/>
    <property type="evidence" value="ECO:0007669"/>
    <property type="project" value="UniProtKB-UniRule"/>
</dbReference>
<dbReference type="GO" id="GO:0000105">
    <property type="term" value="P:L-histidine biosynthetic process"/>
    <property type="evidence" value="ECO:0007669"/>
    <property type="project" value="UniProtKB-UniRule"/>
</dbReference>
<dbReference type="CDD" id="cd13595">
    <property type="entry name" value="PBP2_HisGs"/>
    <property type="match status" value="1"/>
</dbReference>
<dbReference type="FunFam" id="3.40.190.10:FF:000011">
    <property type="entry name" value="ATP phosphoribosyltransferase"/>
    <property type="match status" value="1"/>
</dbReference>
<dbReference type="Gene3D" id="3.40.190.10">
    <property type="entry name" value="Periplasmic binding protein-like II"/>
    <property type="match status" value="2"/>
</dbReference>
<dbReference type="HAMAP" id="MF_01018">
    <property type="entry name" value="HisG_Short"/>
    <property type="match status" value="1"/>
</dbReference>
<dbReference type="InterPro" id="IPR013820">
    <property type="entry name" value="ATP_PRibTrfase_cat"/>
</dbReference>
<dbReference type="InterPro" id="IPR018198">
    <property type="entry name" value="ATP_PRibTrfase_CS"/>
</dbReference>
<dbReference type="InterPro" id="IPR001348">
    <property type="entry name" value="ATP_PRibTrfase_HisG"/>
</dbReference>
<dbReference type="InterPro" id="IPR024893">
    <property type="entry name" value="ATP_PRibTrfase_HisG_short"/>
</dbReference>
<dbReference type="NCBIfam" id="TIGR00070">
    <property type="entry name" value="hisG"/>
    <property type="match status" value="1"/>
</dbReference>
<dbReference type="PANTHER" id="PTHR21403:SF8">
    <property type="entry name" value="ATP PHOSPHORIBOSYLTRANSFERASE"/>
    <property type="match status" value="1"/>
</dbReference>
<dbReference type="PANTHER" id="PTHR21403">
    <property type="entry name" value="ATP PHOSPHORIBOSYLTRANSFERASE ATP-PRTASE"/>
    <property type="match status" value="1"/>
</dbReference>
<dbReference type="Pfam" id="PF01634">
    <property type="entry name" value="HisG"/>
    <property type="match status" value="1"/>
</dbReference>
<dbReference type="SUPFAM" id="SSF53850">
    <property type="entry name" value="Periplasmic binding protein-like II"/>
    <property type="match status" value="1"/>
</dbReference>
<dbReference type="PROSITE" id="PS01316">
    <property type="entry name" value="ATP_P_PHORIBOSYLTR"/>
    <property type="match status" value="1"/>
</dbReference>
<organism>
    <name type="scientific">Burkholderia mallei (strain NCTC 10247)</name>
    <dbReference type="NCBI Taxonomy" id="320389"/>
    <lineage>
        <taxon>Bacteria</taxon>
        <taxon>Pseudomonadati</taxon>
        <taxon>Pseudomonadota</taxon>
        <taxon>Betaproteobacteria</taxon>
        <taxon>Burkholderiales</taxon>
        <taxon>Burkholderiaceae</taxon>
        <taxon>Burkholderia</taxon>
        <taxon>pseudomallei group</taxon>
    </lineage>
</organism>
<evidence type="ECO:0000255" key="1">
    <source>
        <dbReference type="HAMAP-Rule" id="MF_01018"/>
    </source>
</evidence>
<proteinExistence type="inferred from homology"/>